<protein>
    <recommendedName>
        <fullName evidence="1">Hemagglutinin-esterase</fullName>
        <shortName evidence="1">HE protein</shortName>
        <ecNumber evidence="1">3.1.1.53</ecNumber>
    </recommendedName>
    <alternativeName>
        <fullName evidence="1">E3 glycoprotein</fullName>
    </alternativeName>
</protein>
<gene>
    <name evidence="1" type="primary">HE</name>
    <name type="ORF">2b</name>
</gene>
<name>HEMA_CVBEN</name>
<sequence length="424" mass="47618">MFLLPRFVLVSCIIGSLGFDNPPTNVVSHLNGDWFLFGDSRSDCNHVVTTNPRNYSYMDLNPALCGSGKISSKAGNSIFRSFHFTDFYNYTGEGQQIIFYEGVNFTPYHAFKCTTSGSNDIWMQNKGLFYTQVYKNMAVYRSLTFVNVPYVYNGSAQSTALCKSGSLVLNNPAYIAREANFGDYYYKVEADFYLSGCDEYIVPLCIFNGKFLSNTKYYDDSQYYFNKDTGVIYGLNSTETITTGFDFNCHYLVLPSGNYLAISNELLLTVPTKAICLNKRKDFTPVQVVDSRWNNARQSDNMTAVACQPPYCYFRNSTTNYVGVYDINHGDAGFTSILSGLLYDSPCFSQQGVFRYDNVSSVWPLYPYGRCPTAADINTPDVPICVYDPLPIILLGILLGVAVIIIVVLLLYFMVDNGTRLHDA</sequence>
<dbReference type="EC" id="3.1.1.53" evidence="1"/>
<dbReference type="EMBL" id="AF391541">
    <property type="protein sequence ID" value="AAK83355.1"/>
    <property type="molecule type" value="Genomic_RNA"/>
</dbReference>
<dbReference type="RefSeq" id="NP_150076.1">
    <property type="nucleotide sequence ID" value="NC_003045.1"/>
</dbReference>
<dbReference type="SMR" id="P59711"/>
<dbReference type="GlyCosmos" id="P59711">
    <property type="glycosylation" value="8 sites, No reported glycans"/>
</dbReference>
<dbReference type="GeneID" id="921684"/>
<dbReference type="KEGG" id="vg:921684"/>
<dbReference type="Proteomes" id="UP000008570">
    <property type="component" value="Segment"/>
</dbReference>
<dbReference type="GO" id="GO:0020002">
    <property type="term" value="C:host cell plasma membrane"/>
    <property type="evidence" value="ECO:0007669"/>
    <property type="project" value="UniProtKB-SubCell"/>
</dbReference>
<dbReference type="GO" id="GO:0016020">
    <property type="term" value="C:membrane"/>
    <property type="evidence" value="ECO:0007669"/>
    <property type="project" value="UniProtKB-UniRule"/>
</dbReference>
<dbReference type="GO" id="GO:0019031">
    <property type="term" value="C:viral envelope"/>
    <property type="evidence" value="ECO:0007669"/>
    <property type="project" value="UniProtKB-UniRule"/>
</dbReference>
<dbReference type="GO" id="GO:0055036">
    <property type="term" value="C:virion membrane"/>
    <property type="evidence" value="ECO:0007669"/>
    <property type="project" value="UniProtKB-SubCell"/>
</dbReference>
<dbReference type="GO" id="GO:0046789">
    <property type="term" value="F:host cell surface receptor binding"/>
    <property type="evidence" value="ECO:0007669"/>
    <property type="project" value="UniProtKB-UniRule"/>
</dbReference>
<dbReference type="GO" id="GO:0106331">
    <property type="term" value="F:sialate 4-O-acetylesterase activity"/>
    <property type="evidence" value="ECO:0007669"/>
    <property type="project" value="RHEA"/>
</dbReference>
<dbReference type="GO" id="GO:0106330">
    <property type="term" value="F:sialate 9-O-acetylesterase activity"/>
    <property type="evidence" value="ECO:0007669"/>
    <property type="project" value="RHEA"/>
</dbReference>
<dbReference type="GO" id="GO:0001681">
    <property type="term" value="F:sialate O-acetylesterase activity"/>
    <property type="evidence" value="ECO:0000250"/>
    <property type="project" value="UniProtKB"/>
</dbReference>
<dbReference type="GO" id="GO:0019064">
    <property type="term" value="P:fusion of virus membrane with host plasma membrane"/>
    <property type="evidence" value="ECO:0007669"/>
    <property type="project" value="UniProtKB-UniRule"/>
</dbReference>
<dbReference type="HAMAP" id="MF_04207">
    <property type="entry name" value="BETA_CORONA_HE"/>
    <property type="match status" value="1"/>
</dbReference>
<dbReference type="InterPro" id="IPR008980">
    <property type="entry name" value="Capsid_hemagglutn"/>
</dbReference>
<dbReference type="InterPro" id="IPR042545">
    <property type="entry name" value="HEMA"/>
</dbReference>
<dbReference type="InterPro" id="IPR007142">
    <property type="entry name" value="Hemagglutn-estrase_core"/>
</dbReference>
<dbReference type="InterPro" id="IPR003860">
    <property type="entry name" value="Hemagglutn-estrase_hemagglutn"/>
</dbReference>
<dbReference type="Pfam" id="PF03996">
    <property type="entry name" value="Hema_esterase"/>
    <property type="match status" value="1"/>
</dbReference>
<dbReference type="Pfam" id="PF02710">
    <property type="entry name" value="Hema_HEFG"/>
    <property type="match status" value="1"/>
</dbReference>
<dbReference type="SUPFAM" id="SSF52266">
    <property type="entry name" value="SGNH hydrolase"/>
    <property type="match status" value="1"/>
</dbReference>
<dbReference type="SUPFAM" id="SSF49818">
    <property type="entry name" value="Viral protein domain"/>
    <property type="match status" value="1"/>
</dbReference>
<reference key="1">
    <citation type="journal article" date="2001" name="J. Gen. Virol.">
        <title>Comparison of genomic and predicted amino acid sequences of respiratory and enteric bovine coronaviruses isolated from the same animal with fatal shipping pneumonia.</title>
        <authorList>
            <person name="Chouljenko V.N."/>
            <person name="Lin X.Q."/>
            <person name="Storz J."/>
            <person name="Kousoulas K.G."/>
            <person name="Gorbalenya A.E."/>
        </authorList>
    </citation>
    <scope>NUCLEOTIDE SEQUENCE [GENOMIC RNA]</scope>
</reference>
<organism>
    <name type="scientific">Bovine coronavirus (strain 98TXSF-110-ENT)</name>
    <name type="common">BCoV-ENT</name>
    <name type="synonym">BCV</name>
    <dbReference type="NCBI Taxonomy" id="233262"/>
    <lineage>
        <taxon>Viruses</taxon>
        <taxon>Riboviria</taxon>
        <taxon>Orthornavirae</taxon>
        <taxon>Pisuviricota</taxon>
        <taxon>Pisoniviricetes</taxon>
        <taxon>Nidovirales</taxon>
        <taxon>Cornidovirineae</taxon>
        <taxon>Coronaviridae</taxon>
        <taxon>Orthocoronavirinae</taxon>
        <taxon>Betacoronavirus</taxon>
        <taxon>Embecovirus</taxon>
        <taxon>Betacoronavirus 1</taxon>
    </lineage>
</organism>
<evidence type="ECO:0000255" key="1">
    <source>
        <dbReference type="HAMAP-Rule" id="MF_04207"/>
    </source>
</evidence>
<organismHost>
    <name type="scientific">Bos taurus</name>
    <name type="common">Bovine</name>
    <dbReference type="NCBI Taxonomy" id="9913"/>
</organismHost>
<accession>P59711</accession>
<accession>Q98VL2</accession>
<proteinExistence type="inferred from homology"/>
<keyword id="KW-1015">Disulfide bond</keyword>
<keyword id="KW-0325">Glycoprotein</keyword>
<keyword id="KW-0348">Hemagglutinin</keyword>
<keyword id="KW-1032">Host cell membrane</keyword>
<keyword id="KW-1043">Host membrane</keyword>
<keyword id="KW-0378">Hydrolase</keyword>
<keyword id="KW-0472">Membrane</keyword>
<keyword id="KW-0732">Signal</keyword>
<keyword id="KW-0812">Transmembrane</keyword>
<keyword id="KW-1133">Transmembrane helix</keyword>
<keyword id="KW-0261">Viral envelope protein</keyword>
<keyword id="KW-0946">Virion</keyword>
<feature type="signal peptide" evidence="1">
    <location>
        <begin position="1"/>
        <end position="16"/>
    </location>
</feature>
<feature type="chain" id="PRO_0000037133" description="Hemagglutinin-esterase" evidence="1">
    <location>
        <begin position="17"/>
        <end position="424"/>
    </location>
</feature>
<feature type="topological domain" description="Virion surface" evidence="1">
    <location>
        <begin position="17"/>
        <end position="392"/>
    </location>
</feature>
<feature type="transmembrane region" description="Helical" evidence="1">
    <location>
        <begin position="393"/>
        <end position="413"/>
    </location>
</feature>
<feature type="topological domain" description="Intravirion" evidence="1">
    <location>
        <begin position="414"/>
        <end position="424"/>
    </location>
</feature>
<feature type="region of interest" description="Esterase domain 1" evidence="1">
    <location>
        <begin position="7"/>
        <end position="127"/>
    </location>
</feature>
<feature type="region of interest" description="Receptor binding" evidence="1">
    <location>
        <begin position="128"/>
        <end position="266"/>
    </location>
</feature>
<feature type="region of interest" description="Esterase domain 2" evidence="1">
    <location>
        <begin position="267"/>
        <end position="379"/>
    </location>
</feature>
<feature type="active site" description="Nucleophile" evidence="1">
    <location>
        <position position="40"/>
    </location>
</feature>
<feature type="active site" description="Charge relay system" evidence="1">
    <location>
        <position position="326"/>
    </location>
</feature>
<feature type="active site" description="Charge relay system" evidence="1">
    <location>
        <position position="329"/>
    </location>
</feature>
<feature type="glycosylation site" description="N-linked (GlcNAc...) asparagine; by host" evidence="1">
    <location>
        <position position="54"/>
    </location>
</feature>
<feature type="glycosylation site" description="N-linked (GlcNAc...) asparagine; by host" evidence="1">
    <location>
        <position position="89"/>
    </location>
</feature>
<feature type="glycosylation site" description="N-linked (GlcNAc...) asparagine; by host" evidence="1">
    <location>
        <position position="153"/>
    </location>
</feature>
<feature type="glycosylation site" description="N-linked (GlcNAc...) asparagine; by host" evidence="1">
    <location>
        <position position="236"/>
    </location>
</feature>
<feature type="glycosylation site" description="N-linked (GlcNAc...) asparagine; by host" evidence="1">
    <location>
        <position position="301"/>
    </location>
</feature>
<feature type="glycosylation site" description="N-linked (GlcNAc...) asparagine; by host" evidence="1">
    <location>
        <position position="316"/>
    </location>
</feature>
<feature type="glycosylation site" description="N-linked (GlcNAc...) asparagine; by host" evidence="1">
    <location>
        <position position="358"/>
    </location>
</feature>
<feature type="glycosylation site" description="N-linked (GlcNAc...) asparagine; by host" evidence="1">
    <location>
        <position position="417"/>
    </location>
</feature>
<feature type="disulfide bond" evidence="1">
    <location>
        <begin position="44"/>
        <end position="65"/>
    </location>
</feature>
<feature type="disulfide bond" evidence="1">
    <location>
        <begin position="113"/>
        <end position="162"/>
    </location>
</feature>
<feature type="disulfide bond" evidence="1">
    <location>
        <begin position="197"/>
        <end position="276"/>
    </location>
</feature>
<feature type="disulfide bond" evidence="1">
    <location>
        <begin position="205"/>
        <end position="249"/>
    </location>
</feature>
<feature type="disulfide bond" evidence="1">
    <location>
        <begin position="307"/>
        <end position="312"/>
    </location>
</feature>
<feature type="disulfide bond" evidence="1">
    <location>
        <begin position="347"/>
        <end position="371"/>
    </location>
</feature>
<comment type="function">
    <text evidence="1">Structural protein that makes short spikes at the surface of the virus. Contains receptor binding and receptor-destroying activities. Mediates de-O-acetylation of N-acetyl-4-O-acetylneuraminic acid, which is probably the receptor determinant recognized by the virus on the surface of erythrocytes and susceptible cells. This receptor-destroying activity is important for virus release as it probably helps preventing self-aggregation and ensures the efficient spread of the progeny virus from cell to cell. May serve as a secondary viral attachment protein for initiating infection, the spike protein being the major one. May become a target for both the humoral and the cellular branches of the immune system.</text>
</comment>
<comment type="catalytic activity">
    <reaction evidence="1">
        <text>N-acetyl-9-O-acetylneuraminate + H2O = N-acetylneuraminate + acetate + H(+)</text>
        <dbReference type="Rhea" id="RHEA:22600"/>
        <dbReference type="ChEBI" id="CHEBI:15377"/>
        <dbReference type="ChEBI" id="CHEBI:15378"/>
        <dbReference type="ChEBI" id="CHEBI:28999"/>
        <dbReference type="ChEBI" id="CHEBI:30089"/>
        <dbReference type="ChEBI" id="CHEBI:35418"/>
        <dbReference type="EC" id="3.1.1.53"/>
    </reaction>
</comment>
<comment type="catalytic activity">
    <reaction evidence="1">
        <text>N-acetyl-4-O-acetylneuraminate + H2O = N-acetylneuraminate + acetate + H(+)</text>
        <dbReference type="Rhea" id="RHEA:25564"/>
        <dbReference type="ChEBI" id="CHEBI:15377"/>
        <dbReference type="ChEBI" id="CHEBI:15378"/>
        <dbReference type="ChEBI" id="CHEBI:29006"/>
        <dbReference type="ChEBI" id="CHEBI:30089"/>
        <dbReference type="ChEBI" id="CHEBI:35418"/>
        <dbReference type="EC" id="3.1.1.53"/>
    </reaction>
</comment>
<comment type="subunit">
    <text evidence="1">Homodimer; disulfide-linked. Forms a complex with the M protein in the pre-Golgi. Associates then with S-M complex to form a ternary complex S-M-HE.</text>
</comment>
<comment type="subcellular location">
    <subcellularLocation>
        <location evidence="1">Virion membrane</location>
        <topology evidence="1">Single-pass type I membrane protein</topology>
    </subcellularLocation>
    <subcellularLocation>
        <location evidence="1">Host cell membrane</location>
        <topology evidence="1">Single-pass type I membrane protein</topology>
    </subcellularLocation>
    <text evidence="1">In infected cells becomes incorporated into the envelope of virions during virus assembly at the endoplasmic reticulum and cis Golgi. However, some may escape incorporation into virions and subsequently migrate to the cell surface.</text>
</comment>
<comment type="PTM">
    <text>N-glycosylated in the RER.</text>
</comment>
<comment type="PTM">
    <text evidence="1">N-glycosylated in the host RER.</text>
</comment>
<comment type="similarity">
    <text evidence="1">Belongs to the influenza type C/coronaviruses hemagglutinin-esterase family.</text>
</comment>